<comment type="function">
    <text evidence="1">Catalyzes the reversible interconversion of serine and glycine with tetrahydrofolate (THF) serving as the one-carbon carrier. This reaction serves as the major source of one-carbon groups required for the biosynthesis of purines, thymidylate, methionine, and other important biomolecules. Also exhibits THF-independent aldolase activity toward beta-hydroxyamino acids, producing glycine and aldehydes, via a retro-aldol mechanism.</text>
</comment>
<comment type="catalytic activity">
    <reaction evidence="1">
        <text>(6R)-5,10-methylene-5,6,7,8-tetrahydrofolate + glycine + H2O = (6S)-5,6,7,8-tetrahydrofolate + L-serine</text>
        <dbReference type="Rhea" id="RHEA:15481"/>
        <dbReference type="ChEBI" id="CHEBI:15377"/>
        <dbReference type="ChEBI" id="CHEBI:15636"/>
        <dbReference type="ChEBI" id="CHEBI:33384"/>
        <dbReference type="ChEBI" id="CHEBI:57305"/>
        <dbReference type="ChEBI" id="CHEBI:57453"/>
        <dbReference type="EC" id="2.1.2.1"/>
    </reaction>
</comment>
<comment type="cofactor">
    <cofactor evidence="1">
        <name>pyridoxal 5'-phosphate</name>
        <dbReference type="ChEBI" id="CHEBI:597326"/>
    </cofactor>
</comment>
<comment type="pathway">
    <text evidence="1">One-carbon metabolism; tetrahydrofolate interconversion.</text>
</comment>
<comment type="pathway">
    <text evidence="1">Amino-acid biosynthesis; glycine biosynthesis; glycine from L-serine: step 1/1.</text>
</comment>
<comment type="subunit">
    <text evidence="1">Homodimer.</text>
</comment>
<comment type="subcellular location">
    <subcellularLocation>
        <location evidence="1">Cytoplasm</location>
    </subcellularLocation>
</comment>
<comment type="similarity">
    <text evidence="1">Belongs to the SHMT family.</text>
</comment>
<proteinExistence type="inferred from homology"/>
<name>GLYA_ACIF5</name>
<gene>
    <name evidence="1" type="primary">glyA</name>
    <name type="ordered locus">Lferr_0471</name>
</gene>
<feature type="chain" id="PRO_0000369895" description="Serine hydroxymethyltransferase">
    <location>
        <begin position="1"/>
        <end position="414"/>
    </location>
</feature>
<feature type="binding site" evidence="1">
    <location>
        <position position="121"/>
    </location>
    <ligand>
        <name>(6S)-5,6,7,8-tetrahydrofolate</name>
        <dbReference type="ChEBI" id="CHEBI:57453"/>
    </ligand>
</feature>
<feature type="binding site" evidence="1">
    <location>
        <begin position="125"/>
        <end position="127"/>
    </location>
    <ligand>
        <name>(6S)-5,6,7,8-tetrahydrofolate</name>
        <dbReference type="ChEBI" id="CHEBI:57453"/>
    </ligand>
</feature>
<feature type="site" description="Plays an important role in substrate specificity" evidence="1">
    <location>
        <position position="229"/>
    </location>
</feature>
<feature type="modified residue" description="N6-(pyridoxal phosphate)lysine" evidence="1">
    <location>
        <position position="230"/>
    </location>
</feature>
<dbReference type="EC" id="2.1.2.1" evidence="1"/>
<dbReference type="EMBL" id="CP001132">
    <property type="protein sequence ID" value="ACH82725.1"/>
    <property type="molecule type" value="Genomic_DNA"/>
</dbReference>
<dbReference type="RefSeq" id="WP_012536070.1">
    <property type="nucleotide sequence ID" value="NC_011206.1"/>
</dbReference>
<dbReference type="SMR" id="B5ELV3"/>
<dbReference type="GeneID" id="65279676"/>
<dbReference type="KEGG" id="afe:Lferr_0471"/>
<dbReference type="eggNOG" id="COG0112">
    <property type="taxonomic scope" value="Bacteria"/>
</dbReference>
<dbReference type="HOGENOM" id="CLU_022477_2_1_6"/>
<dbReference type="UniPathway" id="UPA00193"/>
<dbReference type="UniPathway" id="UPA00288">
    <property type="reaction ID" value="UER01023"/>
</dbReference>
<dbReference type="GO" id="GO:0005829">
    <property type="term" value="C:cytosol"/>
    <property type="evidence" value="ECO:0007669"/>
    <property type="project" value="TreeGrafter"/>
</dbReference>
<dbReference type="GO" id="GO:0004372">
    <property type="term" value="F:glycine hydroxymethyltransferase activity"/>
    <property type="evidence" value="ECO:0007669"/>
    <property type="project" value="UniProtKB-UniRule"/>
</dbReference>
<dbReference type="GO" id="GO:0030170">
    <property type="term" value="F:pyridoxal phosphate binding"/>
    <property type="evidence" value="ECO:0007669"/>
    <property type="project" value="UniProtKB-UniRule"/>
</dbReference>
<dbReference type="GO" id="GO:0019264">
    <property type="term" value="P:glycine biosynthetic process from serine"/>
    <property type="evidence" value="ECO:0007669"/>
    <property type="project" value="UniProtKB-UniRule"/>
</dbReference>
<dbReference type="GO" id="GO:0035999">
    <property type="term" value="P:tetrahydrofolate interconversion"/>
    <property type="evidence" value="ECO:0007669"/>
    <property type="project" value="UniProtKB-UniRule"/>
</dbReference>
<dbReference type="CDD" id="cd00378">
    <property type="entry name" value="SHMT"/>
    <property type="match status" value="1"/>
</dbReference>
<dbReference type="FunFam" id="3.40.640.10:FF:000001">
    <property type="entry name" value="Serine hydroxymethyltransferase"/>
    <property type="match status" value="1"/>
</dbReference>
<dbReference type="Gene3D" id="3.90.1150.10">
    <property type="entry name" value="Aspartate Aminotransferase, domain 1"/>
    <property type="match status" value="1"/>
</dbReference>
<dbReference type="Gene3D" id="3.40.640.10">
    <property type="entry name" value="Type I PLP-dependent aspartate aminotransferase-like (Major domain)"/>
    <property type="match status" value="1"/>
</dbReference>
<dbReference type="HAMAP" id="MF_00051">
    <property type="entry name" value="SHMT"/>
    <property type="match status" value="1"/>
</dbReference>
<dbReference type="InterPro" id="IPR015424">
    <property type="entry name" value="PyrdxlP-dep_Trfase"/>
</dbReference>
<dbReference type="InterPro" id="IPR015421">
    <property type="entry name" value="PyrdxlP-dep_Trfase_major"/>
</dbReference>
<dbReference type="InterPro" id="IPR015422">
    <property type="entry name" value="PyrdxlP-dep_Trfase_small"/>
</dbReference>
<dbReference type="InterPro" id="IPR001085">
    <property type="entry name" value="Ser_HO-MeTrfase"/>
</dbReference>
<dbReference type="InterPro" id="IPR049943">
    <property type="entry name" value="Ser_HO-MeTrfase-like"/>
</dbReference>
<dbReference type="InterPro" id="IPR019798">
    <property type="entry name" value="Ser_HO-MeTrfase_PLP_BS"/>
</dbReference>
<dbReference type="InterPro" id="IPR039429">
    <property type="entry name" value="SHMT-like_dom"/>
</dbReference>
<dbReference type="NCBIfam" id="NF000586">
    <property type="entry name" value="PRK00011.1"/>
    <property type="match status" value="1"/>
</dbReference>
<dbReference type="PANTHER" id="PTHR11680">
    <property type="entry name" value="SERINE HYDROXYMETHYLTRANSFERASE"/>
    <property type="match status" value="1"/>
</dbReference>
<dbReference type="PANTHER" id="PTHR11680:SF50">
    <property type="entry name" value="SERINE HYDROXYMETHYLTRANSFERASE"/>
    <property type="match status" value="1"/>
</dbReference>
<dbReference type="Pfam" id="PF00464">
    <property type="entry name" value="SHMT"/>
    <property type="match status" value="1"/>
</dbReference>
<dbReference type="PIRSF" id="PIRSF000412">
    <property type="entry name" value="SHMT"/>
    <property type="match status" value="1"/>
</dbReference>
<dbReference type="SUPFAM" id="SSF53383">
    <property type="entry name" value="PLP-dependent transferases"/>
    <property type="match status" value="1"/>
</dbReference>
<dbReference type="PROSITE" id="PS00096">
    <property type="entry name" value="SHMT"/>
    <property type="match status" value="1"/>
</dbReference>
<sequence length="414" mass="44498">MFSKTLTIADFDPVLWDAMRKEARRQEDHVELIASENYASPMVMAAQGSVLTNKYAEGYPGKRYYGGCEYVDIAEQLAMDRALELFGAEHANVQAHSGSQANQAVYLSVLQPGDKIMGMSLAHGGHLTHGAKVNVSGKLFQVAAYGVRAEDGRIDYDAMAEQAERERPKMIVAGASAYSRVIDFARIGEIARSIGAYLLVDMAHIAGLVATGLHPSPVPHADFVTTTTHKTLRGPRGGLILCREQYAKKVNSLIFPGLQGGPLMHVIAAKAVAFREALQPEFKSYQQQVIHNAQTLSKVLAGRGYGAVSGGTDNHLFLLNLGEKVTGKEAEEALGQANITVNKNAVPFDIRPPAVTSGIRIGTPAATTRGFGEAEMHRLGNGIADVLDASSDAAVIERVRADMKALCHQFPVYG</sequence>
<protein>
    <recommendedName>
        <fullName evidence="1">Serine hydroxymethyltransferase</fullName>
        <shortName evidence="1">SHMT</shortName>
        <shortName evidence="1">Serine methylase</shortName>
        <ecNumber evidence="1">2.1.2.1</ecNumber>
    </recommendedName>
</protein>
<accession>B5ELV3</accession>
<keyword id="KW-0028">Amino-acid biosynthesis</keyword>
<keyword id="KW-0963">Cytoplasm</keyword>
<keyword id="KW-0554">One-carbon metabolism</keyword>
<keyword id="KW-0663">Pyridoxal phosphate</keyword>
<keyword id="KW-0808">Transferase</keyword>
<organism>
    <name type="scientific">Acidithiobacillus ferrooxidans (strain ATCC 53993 / BNL-5-31)</name>
    <name type="common">Leptospirillum ferrooxidans (ATCC 53993)</name>
    <dbReference type="NCBI Taxonomy" id="380394"/>
    <lineage>
        <taxon>Bacteria</taxon>
        <taxon>Pseudomonadati</taxon>
        <taxon>Pseudomonadota</taxon>
        <taxon>Acidithiobacillia</taxon>
        <taxon>Acidithiobacillales</taxon>
        <taxon>Acidithiobacillaceae</taxon>
        <taxon>Acidithiobacillus</taxon>
    </lineage>
</organism>
<reference key="1">
    <citation type="submission" date="2008-08" db="EMBL/GenBank/DDBJ databases">
        <title>Complete sequence of Acidithiobacillus ferrooxidans ATCC 53993.</title>
        <authorList>
            <person name="Lucas S."/>
            <person name="Copeland A."/>
            <person name="Lapidus A."/>
            <person name="Glavina del Rio T."/>
            <person name="Dalin E."/>
            <person name="Tice H."/>
            <person name="Bruce D."/>
            <person name="Goodwin L."/>
            <person name="Pitluck S."/>
            <person name="Sims D."/>
            <person name="Brettin T."/>
            <person name="Detter J.C."/>
            <person name="Han C."/>
            <person name="Kuske C.R."/>
            <person name="Larimer F."/>
            <person name="Land M."/>
            <person name="Hauser L."/>
            <person name="Kyrpides N."/>
            <person name="Lykidis A."/>
            <person name="Borole A.P."/>
        </authorList>
    </citation>
    <scope>NUCLEOTIDE SEQUENCE [LARGE SCALE GENOMIC DNA]</scope>
    <source>
        <strain>ATCC 53993 / BNL-5-31</strain>
    </source>
</reference>
<evidence type="ECO:0000255" key="1">
    <source>
        <dbReference type="HAMAP-Rule" id="MF_00051"/>
    </source>
</evidence>